<feature type="chain" id="PRO_0000106977" description="Uncharacterized protein MJ0660">
    <location>
        <begin position="1"/>
        <end position="77"/>
    </location>
</feature>
<feature type="domain" description="TRAM" evidence="1">
    <location>
        <begin position="20"/>
        <end position="77"/>
    </location>
</feature>
<feature type="region of interest" description="Disordered" evidence="2">
    <location>
        <begin position="1"/>
        <end position="21"/>
    </location>
</feature>
<feature type="compositionally biased region" description="Basic residues" evidence="2">
    <location>
        <begin position="1"/>
        <end position="10"/>
    </location>
</feature>
<feature type="compositionally biased region" description="Basic and acidic residues" evidence="2">
    <location>
        <begin position="11"/>
        <end position="21"/>
    </location>
</feature>
<accession>Q58074</accession>
<gene>
    <name type="ordered locus">MJ0660</name>
</gene>
<evidence type="ECO:0000255" key="1">
    <source>
        <dbReference type="PROSITE-ProRule" id="PRU00208"/>
    </source>
</evidence>
<evidence type="ECO:0000256" key="2">
    <source>
        <dbReference type="SAM" id="MobiDB-lite"/>
    </source>
</evidence>
<proteinExistence type="predicted"/>
<reference key="1">
    <citation type="journal article" date="1996" name="Science">
        <title>Complete genome sequence of the methanogenic archaeon, Methanococcus jannaschii.</title>
        <authorList>
            <person name="Bult C.J."/>
            <person name="White O."/>
            <person name="Olsen G.J."/>
            <person name="Zhou L."/>
            <person name="Fleischmann R.D."/>
            <person name="Sutton G.G."/>
            <person name="Blake J.A."/>
            <person name="FitzGerald L.M."/>
            <person name="Clayton R.A."/>
            <person name="Gocayne J.D."/>
            <person name="Kerlavage A.R."/>
            <person name="Dougherty B.A."/>
            <person name="Tomb J.-F."/>
            <person name="Adams M.D."/>
            <person name="Reich C.I."/>
            <person name="Overbeek R."/>
            <person name="Kirkness E.F."/>
            <person name="Weinstock K.G."/>
            <person name="Merrick J.M."/>
            <person name="Glodek A."/>
            <person name="Scott J.L."/>
            <person name="Geoghagen N.S.M."/>
            <person name="Weidman J.F."/>
            <person name="Fuhrmann J.L."/>
            <person name="Nguyen D."/>
            <person name="Utterback T.R."/>
            <person name="Kelley J.M."/>
            <person name="Peterson J.D."/>
            <person name="Sadow P.W."/>
            <person name="Hanna M.C."/>
            <person name="Cotton M.D."/>
            <person name="Roberts K.M."/>
            <person name="Hurst M.A."/>
            <person name="Kaine B.P."/>
            <person name="Borodovsky M."/>
            <person name="Klenk H.-P."/>
            <person name="Fraser C.M."/>
            <person name="Smith H.O."/>
            <person name="Woese C.R."/>
            <person name="Venter J.C."/>
        </authorList>
    </citation>
    <scope>NUCLEOTIDE SEQUENCE [LARGE SCALE GENOMIC DNA]</scope>
    <source>
        <strain>ATCC 43067 / DSM 2661 / JAL-1 / JCM 10045 / NBRC 100440</strain>
    </source>
</reference>
<protein>
    <recommendedName>
        <fullName>Uncharacterized protein MJ0660</fullName>
    </recommendedName>
</protein>
<dbReference type="EMBL" id="L77117">
    <property type="protein sequence ID" value="AAB98653.1"/>
    <property type="molecule type" value="Genomic_DNA"/>
</dbReference>
<dbReference type="PIR" id="D64382">
    <property type="entry name" value="D64382"/>
</dbReference>
<dbReference type="RefSeq" id="WP_010870165.1">
    <property type="nucleotide sequence ID" value="NC_000909.1"/>
</dbReference>
<dbReference type="SMR" id="Q58074"/>
<dbReference type="STRING" id="243232.MJ_0660"/>
<dbReference type="PaxDb" id="243232-MJ_0660"/>
<dbReference type="EnsemblBacteria" id="AAB98653">
    <property type="protein sequence ID" value="AAB98653"/>
    <property type="gene ID" value="MJ_0660"/>
</dbReference>
<dbReference type="GeneID" id="8805396"/>
<dbReference type="KEGG" id="mja:MJ_0660"/>
<dbReference type="eggNOG" id="arCOG01641">
    <property type="taxonomic scope" value="Archaea"/>
</dbReference>
<dbReference type="HOGENOM" id="CLU_182721_0_0_2"/>
<dbReference type="InParanoid" id="Q58074"/>
<dbReference type="OrthoDB" id="28569at2157"/>
<dbReference type="PhylomeDB" id="Q58074"/>
<dbReference type="Proteomes" id="UP000000805">
    <property type="component" value="Chromosome"/>
</dbReference>
<dbReference type="Gene3D" id="2.40.50.140">
    <property type="entry name" value="Nucleic acid-binding proteins"/>
    <property type="match status" value="1"/>
</dbReference>
<dbReference type="InterPro" id="IPR012340">
    <property type="entry name" value="NA-bd_OB-fold"/>
</dbReference>
<dbReference type="InterPro" id="IPR002792">
    <property type="entry name" value="TRAM_dom"/>
</dbReference>
<dbReference type="Pfam" id="PF01938">
    <property type="entry name" value="TRAM"/>
    <property type="match status" value="1"/>
</dbReference>
<dbReference type="SUPFAM" id="SSF50249">
    <property type="entry name" value="Nucleic acid-binding proteins"/>
    <property type="match status" value="1"/>
</dbReference>
<dbReference type="PROSITE" id="PS50926">
    <property type="entry name" value="TRAM"/>
    <property type="match status" value="1"/>
</dbReference>
<sequence length="77" mass="8631">MFNNKGRRNVRNNEVRRNVPVKEGETYTVTIEDMGRGGDGIARVEGFVVFVPETQKGETVNVKITAVKSKFAFAEKI</sequence>
<name>Y660_METJA</name>
<keyword id="KW-1185">Reference proteome</keyword>
<organism>
    <name type="scientific">Methanocaldococcus jannaschii (strain ATCC 43067 / DSM 2661 / JAL-1 / JCM 10045 / NBRC 100440)</name>
    <name type="common">Methanococcus jannaschii</name>
    <dbReference type="NCBI Taxonomy" id="243232"/>
    <lineage>
        <taxon>Archaea</taxon>
        <taxon>Methanobacteriati</taxon>
        <taxon>Methanobacteriota</taxon>
        <taxon>Methanomada group</taxon>
        <taxon>Methanococci</taxon>
        <taxon>Methanococcales</taxon>
        <taxon>Methanocaldococcaceae</taxon>
        <taxon>Methanocaldococcus</taxon>
    </lineage>
</organism>